<evidence type="ECO:0000255" key="1">
    <source>
        <dbReference type="HAMAP-Rule" id="MF_00741"/>
    </source>
</evidence>
<protein>
    <recommendedName>
        <fullName evidence="1">Phosphoribosylformylglycinamidine cyclo-ligase</fullName>
        <ecNumber evidence="1">6.3.3.1</ecNumber>
    </recommendedName>
    <alternativeName>
        <fullName evidence="1">AIR synthase</fullName>
    </alternativeName>
    <alternativeName>
        <fullName evidence="1">AIRS</fullName>
    </alternativeName>
    <alternativeName>
        <fullName evidence="1">Phosphoribosyl-aminoimidazole synthetase</fullName>
    </alternativeName>
</protein>
<accession>Q71YQ1</accession>
<gene>
    <name evidence="1" type="primary">purM</name>
    <name type="ordered locus">LMOf2365_1792</name>
</gene>
<dbReference type="EC" id="6.3.3.1" evidence="1"/>
<dbReference type="EMBL" id="AE017262">
    <property type="protein sequence ID" value="AAT04563.1"/>
    <property type="molecule type" value="Genomic_DNA"/>
</dbReference>
<dbReference type="RefSeq" id="WP_003726210.1">
    <property type="nucleotide sequence ID" value="NC_002973.6"/>
</dbReference>
<dbReference type="SMR" id="Q71YQ1"/>
<dbReference type="KEGG" id="lmf:LMOf2365_1792"/>
<dbReference type="HOGENOM" id="CLU_047116_0_0_9"/>
<dbReference type="UniPathway" id="UPA00074">
    <property type="reaction ID" value="UER00129"/>
</dbReference>
<dbReference type="GO" id="GO:0005829">
    <property type="term" value="C:cytosol"/>
    <property type="evidence" value="ECO:0007669"/>
    <property type="project" value="TreeGrafter"/>
</dbReference>
<dbReference type="GO" id="GO:0005524">
    <property type="term" value="F:ATP binding"/>
    <property type="evidence" value="ECO:0007669"/>
    <property type="project" value="UniProtKB-KW"/>
</dbReference>
<dbReference type="GO" id="GO:0004637">
    <property type="term" value="F:phosphoribosylamine-glycine ligase activity"/>
    <property type="evidence" value="ECO:0007669"/>
    <property type="project" value="TreeGrafter"/>
</dbReference>
<dbReference type="GO" id="GO:0004641">
    <property type="term" value="F:phosphoribosylformylglycinamidine cyclo-ligase activity"/>
    <property type="evidence" value="ECO:0007669"/>
    <property type="project" value="UniProtKB-UniRule"/>
</dbReference>
<dbReference type="GO" id="GO:0006189">
    <property type="term" value="P:'de novo' IMP biosynthetic process"/>
    <property type="evidence" value="ECO:0007669"/>
    <property type="project" value="UniProtKB-UniRule"/>
</dbReference>
<dbReference type="GO" id="GO:0046084">
    <property type="term" value="P:adenine biosynthetic process"/>
    <property type="evidence" value="ECO:0007669"/>
    <property type="project" value="TreeGrafter"/>
</dbReference>
<dbReference type="CDD" id="cd02196">
    <property type="entry name" value="PurM"/>
    <property type="match status" value="1"/>
</dbReference>
<dbReference type="FunFam" id="3.30.1330.10:FF:000001">
    <property type="entry name" value="Phosphoribosylformylglycinamidine cyclo-ligase"/>
    <property type="match status" value="1"/>
</dbReference>
<dbReference type="FunFam" id="3.90.650.10:FF:000001">
    <property type="entry name" value="Phosphoribosylformylglycinamidine cyclo-ligase"/>
    <property type="match status" value="1"/>
</dbReference>
<dbReference type="Gene3D" id="3.90.650.10">
    <property type="entry name" value="PurM-like C-terminal domain"/>
    <property type="match status" value="1"/>
</dbReference>
<dbReference type="Gene3D" id="3.30.1330.10">
    <property type="entry name" value="PurM-like, N-terminal domain"/>
    <property type="match status" value="1"/>
</dbReference>
<dbReference type="HAMAP" id="MF_00741">
    <property type="entry name" value="AIRS"/>
    <property type="match status" value="1"/>
</dbReference>
<dbReference type="InterPro" id="IPR010918">
    <property type="entry name" value="PurM-like_C_dom"/>
</dbReference>
<dbReference type="InterPro" id="IPR036676">
    <property type="entry name" value="PurM-like_C_sf"/>
</dbReference>
<dbReference type="InterPro" id="IPR016188">
    <property type="entry name" value="PurM-like_N"/>
</dbReference>
<dbReference type="InterPro" id="IPR036921">
    <property type="entry name" value="PurM-like_N_sf"/>
</dbReference>
<dbReference type="InterPro" id="IPR004733">
    <property type="entry name" value="PurM_cligase"/>
</dbReference>
<dbReference type="NCBIfam" id="TIGR00878">
    <property type="entry name" value="purM"/>
    <property type="match status" value="1"/>
</dbReference>
<dbReference type="PANTHER" id="PTHR10520:SF12">
    <property type="entry name" value="TRIFUNCTIONAL PURINE BIOSYNTHETIC PROTEIN ADENOSINE-3"/>
    <property type="match status" value="1"/>
</dbReference>
<dbReference type="PANTHER" id="PTHR10520">
    <property type="entry name" value="TRIFUNCTIONAL PURINE BIOSYNTHETIC PROTEIN ADENOSINE-3-RELATED"/>
    <property type="match status" value="1"/>
</dbReference>
<dbReference type="Pfam" id="PF00586">
    <property type="entry name" value="AIRS"/>
    <property type="match status" value="1"/>
</dbReference>
<dbReference type="Pfam" id="PF02769">
    <property type="entry name" value="AIRS_C"/>
    <property type="match status" value="1"/>
</dbReference>
<dbReference type="SUPFAM" id="SSF56042">
    <property type="entry name" value="PurM C-terminal domain-like"/>
    <property type="match status" value="1"/>
</dbReference>
<dbReference type="SUPFAM" id="SSF55326">
    <property type="entry name" value="PurM N-terminal domain-like"/>
    <property type="match status" value="1"/>
</dbReference>
<proteinExistence type="inferred from homology"/>
<organism>
    <name type="scientific">Listeria monocytogenes serotype 4b (strain F2365)</name>
    <dbReference type="NCBI Taxonomy" id="265669"/>
    <lineage>
        <taxon>Bacteria</taxon>
        <taxon>Bacillati</taxon>
        <taxon>Bacillota</taxon>
        <taxon>Bacilli</taxon>
        <taxon>Bacillales</taxon>
        <taxon>Listeriaceae</taxon>
        <taxon>Listeria</taxon>
    </lineage>
</organism>
<comment type="catalytic activity">
    <reaction evidence="1">
        <text>2-formamido-N(1)-(5-O-phospho-beta-D-ribosyl)acetamidine + ATP = 5-amino-1-(5-phospho-beta-D-ribosyl)imidazole + ADP + phosphate + H(+)</text>
        <dbReference type="Rhea" id="RHEA:23032"/>
        <dbReference type="ChEBI" id="CHEBI:15378"/>
        <dbReference type="ChEBI" id="CHEBI:30616"/>
        <dbReference type="ChEBI" id="CHEBI:43474"/>
        <dbReference type="ChEBI" id="CHEBI:137981"/>
        <dbReference type="ChEBI" id="CHEBI:147287"/>
        <dbReference type="ChEBI" id="CHEBI:456216"/>
        <dbReference type="EC" id="6.3.3.1"/>
    </reaction>
</comment>
<comment type="pathway">
    <text evidence="1">Purine metabolism; IMP biosynthesis via de novo pathway; 5-amino-1-(5-phospho-D-ribosyl)imidazole from N(2)-formyl-N(1)-(5-phospho-D-ribosyl)glycinamide: step 2/2.</text>
</comment>
<comment type="subcellular location">
    <subcellularLocation>
        <location evidence="1">Cytoplasm</location>
    </subcellularLocation>
</comment>
<comment type="similarity">
    <text evidence="1">Belongs to the AIR synthase family.</text>
</comment>
<sequence>MAENAYSKAGVDVEAGYQVVERIKKHVARTERLGAMGALGSFGGMFDLSSLHLKEPVLVSGTDGVGTKLLLAIEADKHDTIGIDCVAMCVNDILAQGAEPLFFLDYIATGKTDPVKMEQIVKGVADGCEQAGAALIGGETAEMPDMYGAEDYDLAGFTVGAVEKQKLITEGAVKEGDTLIGIPSSGIHSNGYSLVRKIFFKDNELTLDAEISELDVPLVEELLKPTRIYVKPVLEVLKEVDVHGITHVTGGGFVENLPRMLTNDLAVKVELGSWPVLPIFDVMKKYGQLSELEMYEIFNMGIGMVLAVAKADVERTLEVLVQNGEAAYVIGEVTTRENDAVIFTGGTKG</sequence>
<keyword id="KW-0067">ATP-binding</keyword>
<keyword id="KW-0963">Cytoplasm</keyword>
<keyword id="KW-0436">Ligase</keyword>
<keyword id="KW-0547">Nucleotide-binding</keyword>
<keyword id="KW-0658">Purine biosynthesis</keyword>
<reference key="1">
    <citation type="journal article" date="2004" name="Nucleic Acids Res.">
        <title>Whole genome comparisons of serotype 4b and 1/2a strains of the food-borne pathogen Listeria monocytogenes reveal new insights into the core genome components of this species.</title>
        <authorList>
            <person name="Nelson K.E."/>
            <person name="Fouts D.E."/>
            <person name="Mongodin E.F."/>
            <person name="Ravel J."/>
            <person name="DeBoy R.T."/>
            <person name="Kolonay J.F."/>
            <person name="Rasko D.A."/>
            <person name="Angiuoli S.V."/>
            <person name="Gill S.R."/>
            <person name="Paulsen I.T."/>
            <person name="Peterson J.D."/>
            <person name="White O."/>
            <person name="Nelson W.C."/>
            <person name="Nierman W.C."/>
            <person name="Beanan M.J."/>
            <person name="Brinkac L.M."/>
            <person name="Daugherty S.C."/>
            <person name="Dodson R.J."/>
            <person name="Durkin A.S."/>
            <person name="Madupu R."/>
            <person name="Haft D.H."/>
            <person name="Selengut J."/>
            <person name="Van Aken S.E."/>
            <person name="Khouri H.M."/>
            <person name="Fedorova N."/>
            <person name="Forberger H.A."/>
            <person name="Tran B."/>
            <person name="Kathariou S."/>
            <person name="Wonderling L.D."/>
            <person name="Uhlich G.A."/>
            <person name="Bayles D.O."/>
            <person name="Luchansky J.B."/>
            <person name="Fraser C.M."/>
        </authorList>
    </citation>
    <scope>NUCLEOTIDE SEQUENCE [LARGE SCALE GENOMIC DNA]</scope>
    <source>
        <strain>F2365</strain>
    </source>
</reference>
<name>PUR5_LISMF</name>
<feature type="chain" id="PRO_0000148222" description="Phosphoribosylformylglycinamidine cyclo-ligase">
    <location>
        <begin position="1"/>
        <end position="349"/>
    </location>
</feature>